<keyword id="KW-0119">Carbohydrate metabolism</keyword>
<keyword id="KW-0274">FAD</keyword>
<keyword id="KW-0285">Flavoprotein</keyword>
<keyword id="KW-0325">Glycoprotein</keyword>
<keyword id="KW-0560">Oxidoreductase</keyword>
<keyword id="KW-0964">Secreted</keyword>
<keyword id="KW-0732">Signal</keyword>
<evidence type="ECO:0000250" key="1">
    <source>
        <dbReference type="UniProtKB" id="E4QP00"/>
    </source>
</evidence>
<evidence type="ECO:0000250" key="2">
    <source>
        <dbReference type="UniProtKB" id="Q3L245"/>
    </source>
</evidence>
<evidence type="ECO:0000255" key="3">
    <source>
        <dbReference type="PROSITE-ProRule" id="PRU00498"/>
    </source>
</evidence>
<evidence type="ECO:0000269" key="4">
    <source>
    </source>
</evidence>
<evidence type="ECO:0000303" key="5">
    <source>
    </source>
</evidence>
<evidence type="ECO:0000305" key="6"/>
<protein>
    <recommendedName>
        <fullName evidence="5">Pyranose dehydrogenase 3</fullName>
        <shortName evidence="5">PDH 3</shortName>
        <ecNumber evidence="2">1.1.99.29</ecNumber>
    </recommendedName>
    <alternativeName>
        <fullName evidence="2">Pyranose:quinone oxidoreductase 3</fullName>
    </alternativeName>
</protein>
<feature type="signal peptide" evidence="2">
    <location>
        <begin position="1"/>
        <end position="25"/>
    </location>
</feature>
<feature type="chain" id="PRO_0000431289" description="Pyranose dehydrogenase 3">
    <location>
        <begin position="26"/>
        <end position="600"/>
    </location>
</feature>
<feature type="active site" description="Proton acceptor" evidence="1">
    <location>
        <position position="535"/>
    </location>
</feature>
<feature type="active site" evidence="2">
    <location>
        <position position="579"/>
    </location>
</feature>
<feature type="modified residue" description="Tele-8alpha-FAD histidine" evidence="2">
    <location>
        <position position="127"/>
    </location>
</feature>
<feature type="glycosylation site" description="N-linked (GlcNAc...) asparagine" evidence="3">
    <location>
        <position position="99"/>
    </location>
</feature>
<feature type="glycosylation site" description="N-linked (GlcNAc...) asparagine" evidence="3">
    <location>
        <position position="114"/>
    </location>
</feature>
<feature type="glycosylation site" description="N-linked (GlcNAc...) asparagine" evidence="3">
    <location>
        <position position="173"/>
    </location>
</feature>
<feature type="glycosylation site" description="N-linked (GlcNAc...) asparagine" evidence="3">
    <location>
        <position position="199"/>
    </location>
</feature>
<feature type="glycosylation site" description="N-linked (GlcNAc...) asparagine" evidence="3">
    <location>
        <position position="275"/>
    </location>
</feature>
<feature type="glycosylation site" description="N-linked (GlcNAc...) asparagine" evidence="3">
    <location>
        <position position="342"/>
    </location>
</feature>
<feature type="glycosylation site" description="N-linked (GlcNAc...) asparagine" evidence="3">
    <location>
        <position position="399"/>
    </location>
</feature>
<feature type="glycosylation site" description="N-linked (GlcNAc...) asparagine" evidence="3">
    <location>
        <position position="507"/>
    </location>
</feature>
<feature type="glycosylation site" description="N-linked (GlcNAc...) asparagine" evidence="3">
    <location>
        <position position="546"/>
    </location>
</feature>
<dbReference type="EC" id="1.1.99.29" evidence="2"/>
<dbReference type="EMBL" id="DQ117577">
    <property type="protein sequence ID" value="AAZ94874.1"/>
    <property type="molecule type" value="Genomic_DNA"/>
</dbReference>
<dbReference type="EMBL" id="DQ117578">
    <property type="protein sequence ID" value="AAZ94875.1"/>
    <property type="molecule type" value="mRNA"/>
</dbReference>
<dbReference type="SMR" id="Q0R4L2"/>
<dbReference type="CAZy" id="AA3">
    <property type="family name" value="Auxiliary Activities 3"/>
</dbReference>
<dbReference type="GlyCosmos" id="Q0R4L2">
    <property type="glycosylation" value="9 sites, No reported glycans"/>
</dbReference>
<dbReference type="BRENDA" id="1.1.99.29">
    <property type="organism ID" value="7355"/>
</dbReference>
<dbReference type="GO" id="GO:0005576">
    <property type="term" value="C:extracellular region"/>
    <property type="evidence" value="ECO:0007669"/>
    <property type="project" value="UniProtKB-SubCell"/>
</dbReference>
<dbReference type="GO" id="GO:0050660">
    <property type="term" value="F:flavin adenine dinucleotide binding"/>
    <property type="evidence" value="ECO:0007669"/>
    <property type="project" value="InterPro"/>
</dbReference>
<dbReference type="GO" id="GO:0033718">
    <property type="term" value="F:pyranose dehydrogenase (acceptor) activity"/>
    <property type="evidence" value="ECO:0007669"/>
    <property type="project" value="UniProtKB-EC"/>
</dbReference>
<dbReference type="Gene3D" id="3.50.50.60">
    <property type="entry name" value="FAD/NAD(P)-binding domain"/>
    <property type="match status" value="1"/>
</dbReference>
<dbReference type="Gene3D" id="3.30.560.10">
    <property type="entry name" value="Glucose Oxidase, domain 3"/>
    <property type="match status" value="1"/>
</dbReference>
<dbReference type="InterPro" id="IPR036188">
    <property type="entry name" value="FAD/NAD-bd_sf"/>
</dbReference>
<dbReference type="InterPro" id="IPR012132">
    <property type="entry name" value="GMC_OxRdtase"/>
</dbReference>
<dbReference type="InterPro" id="IPR000172">
    <property type="entry name" value="GMC_OxRdtase_N"/>
</dbReference>
<dbReference type="InterPro" id="IPR007867">
    <property type="entry name" value="GMC_OxRtase_C"/>
</dbReference>
<dbReference type="PANTHER" id="PTHR11552:SF147">
    <property type="entry name" value="CHOLINE DEHYDROGENASE, MITOCHONDRIAL"/>
    <property type="match status" value="1"/>
</dbReference>
<dbReference type="PANTHER" id="PTHR11552">
    <property type="entry name" value="GLUCOSE-METHANOL-CHOLINE GMC OXIDOREDUCTASE"/>
    <property type="match status" value="1"/>
</dbReference>
<dbReference type="Pfam" id="PF05199">
    <property type="entry name" value="GMC_oxred_C"/>
    <property type="match status" value="1"/>
</dbReference>
<dbReference type="Pfam" id="PF00732">
    <property type="entry name" value="GMC_oxred_N"/>
    <property type="match status" value="1"/>
</dbReference>
<dbReference type="PIRSF" id="PIRSF000137">
    <property type="entry name" value="Alcohol_oxidase"/>
    <property type="match status" value="1"/>
</dbReference>
<dbReference type="SUPFAM" id="SSF54373">
    <property type="entry name" value="FAD-linked reductases, C-terminal domain"/>
    <property type="match status" value="1"/>
</dbReference>
<dbReference type="SUPFAM" id="SSF51905">
    <property type="entry name" value="FAD/NAD(P)-binding domain"/>
    <property type="match status" value="1"/>
</dbReference>
<comment type="function">
    <text evidence="2">Catalyzes the single-oxidation or sequential double oxidation reaction of carbohydrates primarily at carbon-2 and/or carbon-3 with the concomitant reduction of the flavin. The enzyme exhibits a broad sugar substrate specificity, oxidizing different aldopyranoses to the corresponding C-1, C-2, C-3 or C-1,2, C-2,3 and C-3,4 (di)dehydro sugars with substrate-specific regioselectivity. Accepts only a narrow range of electron acceptors such as substituted benzoquinones and complexed metal ions and reacts extremely slowly with O(2) as acceptor. May play a role in the natural recycling of plant matter by oxidizing all major monosaccharides in lignocellulose and by reducing quinone compounds or reactive radical species generated during lignin depolymerization (By similarity).</text>
</comment>
<comment type="catalytic activity">
    <reaction evidence="2">
        <text>pyranose + acceptor = pyranos-2-ulose + reduced acceptor.</text>
        <dbReference type="EC" id="1.1.99.29"/>
    </reaction>
</comment>
<comment type="catalytic activity">
    <reaction evidence="2">
        <text>pyranose + acceptor = pyranos-3-ulose + reduced acceptor.</text>
        <dbReference type="EC" id="1.1.99.29"/>
    </reaction>
</comment>
<comment type="catalytic activity">
    <reaction evidence="2">
        <text>pyranose + acceptor = pyranos-2,3-diulose + reduced acceptor.</text>
        <dbReference type="EC" id="1.1.99.29"/>
    </reaction>
</comment>
<comment type="catalytic activity">
    <reaction evidence="2">
        <text>a pyranoside + acceptor = a pyranosid-3-ulose + reduced acceptor.</text>
        <dbReference type="EC" id="1.1.99.29"/>
    </reaction>
</comment>
<comment type="catalytic activity">
    <reaction evidence="2">
        <text>a pyranoside + acceptor = a pyranosid-3,4-diulose + reduced acceptor.</text>
        <dbReference type="EC" id="1.1.99.29"/>
    </reaction>
</comment>
<comment type="cofactor">
    <cofactor evidence="2">
        <name>FAD</name>
        <dbReference type="ChEBI" id="CHEBI:57692"/>
    </cofactor>
    <text evidence="2">Binds 1 FAD covalently per subunit.</text>
</comment>
<comment type="subunit">
    <text evidence="2">Monomer.</text>
</comment>
<comment type="subcellular location">
    <subcellularLocation>
        <location evidence="2">Secreted</location>
    </subcellularLocation>
</comment>
<comment type="induction">
    <text evidence="4">Constitutively expressed, but on a much lower level than phd1 (only 4.8% of the amount of transcript).</text>
</comment>
<comment type="PTM">
    <text evidence="2">N-glycosylated.</text>
</comment>
<comment type="similarity">
    <text evidence="6">Belongs to the GMC oxidoreductase family.</text>
</comment>
<reference key="1">
    <citation type="journal article" date="2008" name="Curr. Genet.">
        <title>Molecular cloning of three pyranose dehydrogenase-encoding genes from Agaricus meleagris and analysis of their expression by real-time RT-PCR.</title>
        <authorList>
            <person name="Kittl R."/>
            <person name="Sygmund C."/>
            <person name="Halada P."/>
            <person name="Volc J."/>
            <person name="Divne C."/>
            <person name="Haltrich D."/>
            <person name="Peterbauer C.K."/>
        </authorList>
    </citation>
    <scope>NUCLEOTIDE SEQUENCE [GENOMIC DNA / MRNA]</scope>
    <scope>INDUCTION</scope>
    <source>
        <strain>CCBAS 907</strain>
    </source>
</reference>
<name>PDH3_LEUMG</name>
<sequence length="600" mass="65036">MLPRVARLNTHLVSLALLGFQITYGAITYQHPDDLPSDVDYDFIVAGGGTAGLVVASRLSENPDWNILVIEAGPSNKDAPETRVPGLAGSLPASRTDWNYTTIPQDALGGRSLNYSRAKVLGGCSSHNSMVYTRGSKDDWNHWADITGDQGLSWDSILPVMKKAEKFSKDFSNQSVDGHIDPSMHGHDGLLSVVSSYTNVSFNDLLLETTKELSDEFPFKLDLNDGNPHGLAWTQYTIDHRAERSSSATSYLESTRDNVHVLVNSRVTRIFSAGNGTDFRSVEFAVDANSPKKVLTAKKEVILSAGVIASPQVLMNSGIGGREELQAIGVDTLIDNPSVGKNLSDQAATLLMFDTTLPNTDYDVAAALTEWEDSRSGPMAYGARLNHLTWVRLLDDKLNGSDPSSGKNSPHIEFQFMQISHQLPPADAPNQVKLPDPDSIGAVLLLAVVNLYSVSHGSIILNDNDPFANPMIDLNMFGDQKDIAILREGVRSARRMFSSQAFKDVVNGTVYPPADVTSDEDLDAFLRTSAISYWHGVGTLSMSPQNASWGVVDPDFRVKGTSGLRVVDASVIPYAPAGHTQVPVYTFAEHASVLIAKSYA</sequence>
<gene>
    <name evidence="5" type="primary">pdh3</name>
</gene>
<proteinExistence type="evidence at transcript level"/>
<organism>
    <name type="scientific">Leucoagaricus meleagris</name>
    <name type="common">Western flat-topped agaric</name>
    <name type="synonym">Agaricus meleagris</name>
    <dbReference type="NCBI Taxonomy" id="201219"/>
    <lineage>
        <taxon>Eukaryota</taxon>
        <taxon>Fungi</taxon>
        <taxon>Dikarya</taxon>
        <taxon>Basidiomycota</taxon>
        <taxon>Agaricomycotina</taxon>
        <taxon>Agaricomycetes</taxon>
        <taxon>Agaricomycetidae</taxon>
        <taxon>Agaricales</taxon>
        <taxon>Agaricineae</taxon>
        <taxon>Agaricaceae</taxon>
        <taxon>Leucoagaricus</taxon>
    </lineage>
</organism>
<accession>Q0R4L2</accession>